<protein>
    <recommendedName>
        <fullName>U24 protein</fullName>
    </recommendedName>
</protein>
<organism>
    <name type="scientific">Human herpesvirus 6B (strain Z29)</name>
    <name type="common">HHV-6 variant B</name>
    <name type="synonym">Human B lymphotropic virus</name>
    <dbReference type="NCBI Taxonomy" id="36351"/>
    <lineage>
        <taxon>Viruses</taxon>
        <taxon>Duplodnaviria</taxon>
        <taxon>Heunggongvirae</taxon>
        <taxon>Peploviricota</taxon>
        <taxon>Herviviricetes</taxon>
        <taxon>Herpesvirales</taxon>
        <taxon>Orthoherpesviridae</taxon>
        <taxon>Betaherpesvirinae</taxon>
        <taxon>Roseolovirus</taxon>
        <taxon>Roseolovirus humanbeta6b</taxon>
        <taxon>Human herpesvirus 6B</taxon>
    </lineage>
</organism>
<comment type="function">
    <text evidence="3">Down-regulates the TCR/CD3E complex and the transferrin receptor TFRC in host T-cells by blocking them from recycling back to the cell surface.</text>
</comment>
<comment type="subunit">
    <text evidence="1">Interacts with host ITCH; this interaction probably mediates ITCH degradation (By similarity). Interacts probably with NEDD4 (By similarity).</text>
</comment>
<comment type="subcellular location">
    <subcellularLocation>
        <location evidence="1">Membrane</location>
        <topology evidence="4">Single-pass membrane protein</topology>
    </subcellularLocation>
</comment>
<comment type="domain">
    <text evidence="1">Late-budding domains (L domains) are short sequence motifs essential for viral particle budding. They recruit proteins of the host ESCRT machinery (Endosomal Sorting Complex Required for Transport) or ESCRT-associated proteins. Contains one L domain: a PPXY motif which is involved in the interaction with Itch, a member of the Nedd4 family.</text>
</comment>
<accession>Q9QJ42</accession>
<sequence length="88" mass="10152">MDRPRTPPPSYSEVLMMDVMYGQVSPHASNDTSFVECLPPPQSSRSAWNLWNKRRKTFAFLVLTGLAIAMILFIAFVIYVFNVNRRKK</sequence>
<evidence type="ECO:0000250" key="1">
    <source>
        <dbReference type="UniProtKB" id="Q69559"/>
    </source>
</evidence>
<evidence type="ECO:0000255" key="2"/>
<evidence type="ECO:0000269" key="3">
    <source>
    </source>
</evidence>
<evidence type="ECO:0000305" key="4"/>
<gene>
    <name type="primary">U24</name>
</gene>
<proteinExistence type="evidence at protein level"/>
<organismHost>
    <name type="scientific">Homo sapiens</name>
    <name type="common">Human</name>
    <dbReference type="NCBI Taxonomy" id="9606"/>
</organismHost>
<dbReference type="EMBL" id="AF157706">
    <property type="protein sequence ID" value="AAD49637.1"/>
    <property type="molecule type" value="Genomic_DNA"/>
</dbReference>
<dbReference type="RefSeq" id="NP_050204.1">
    <property type="nucleotide sequence ID" value="NC_000898.1"/>
</dbReference>
<dbReference type="DNASU" id="1497025"/>
<dbReference type="GeneID" id="1497025"/>
<dbReference type="KEGG" id="vg:1497025"/>
<dbReference type="Proteomes" id="UP000006930">
    <property type="component" value="Segment"/>
</dbReference>
<dbReference type="GO" id="GO:0016020">
    <property type="term" value="C:membrane"/>
    <property type="evidence" value="ECO:0007669"/>
    <property type="project" value="UniProtKB-SubCell"/>
</dbReference>
<reference key="1">
    <citation type="journal article" date="1999" name="J. Virol.">
        <title>Human herpesvirus 6B genome sequence: coding content and comparison with human herpesvirus 6A.</title>
        <authorList>
            <person name="Dominguez G."/>
            <person name="Dambaugh T.R."/>
            <person name="Stamey F.R."/>
            <person name="Dewhurst S."/>
            <person name="Inoue N."/>
            <person name="Pellett P.E."/>
        </authorList>
    </citation>
    <scope>NUCLEOTIDE SEQUENCE [LARGE SCALE GENOMIC DNA]</scope>
</reference>
<reference key="2">
    <citation type="journal article" date="2010" name="J. Virol.">
        <title>The U24 protein from human herpesvirus 6 and 7 affects endocytic recycling.</title>
        <authorList>
            <person name="Sullivan B.M."/>
            <person name="Coscoy L."/>
        </authorList>
    </citation>
    <scope>FUNCTION</scope>
    <scope>MUTAGENESIS OF 7-PRO--PRO-9</scope>
</reference>
<name>U24_HHV6Z</name>
<keyword id="KW-0472">Membrane</keyword>
<keyword id="KW-0597">Phosphoprotein</keyword>
<keyword id="KW-1185">Reference proteome</keyword>
<keyword id="KW-0812">Transmembrane</keyword>
<keyword id="KW-1133">Transmembrane helix</keyword>
<feature type="chain" id="PRO_0000408427" description="U24 protein">
    <location>
        <begin position="1"/>
        <end position="88"/>
    </location>
</feature>
<feature type="transmembrane region" description="Helical" evidence="2">
    <location>
        <begin position="58"/>
        <end position="78"/>
    </location>
</feature>
<feature type="short sequence motif" description="PPXY motif" evidence="1">
    <location>
        <begin position="8"/>
        <end position="11"/>
    </location>
</feature>
<feature type="modified residue" description="Phosphothreonine" evidence="1">
    <location>
        <position position="6"/>
    </location>
</feature>
<feature type="mutagenesis site" description="Complete loss of the ability to down-regulate the TCR complex." evidence="3">
    <original>PPP</original>
    <variation>AAA</variation>
    <location>
        <begin position="7"/>
        <end position="9"/>
    </location>
</feature>